<dbReference type="EC" id="7.-.-.-" evidence="1"/>
<dbReference type="EMBL" id="AE005674">
    <property type="protein sequence ID" value="AAN43237.1"/>
    <property type="molecule type" value="Genomic_DNA"/>
</dbReference>
<dbReference type="EMBL" id="AE014073">
    <property type="protein sequence ID" value="AAP17123.1"/>
    <property type="molecule type" value="Genomic_DNA"/>
</dbReference>
<dbReference type="RefSeq" id="WP_000231904.1">
    <property type="nucleotide sequence ID" value="NZ_WPGW01000065.1"/>
</dbReference>
<dbReference type="SMR" id="Q83KY5"/>
<dbReference type="STRING" id="198214.SF1655"/>
<dbReference type="PaxDb" id="198214-SF1655"/>
<dbReference type="KEGG" id="sfl:SF1655"/>
<dbReference type="KEGG" id="sfx:S1787"/>
<dbReference type="PATRIC" id="fig|198214.7.peg.1951"/>
<dbReference type="HOGENOM" id="CLU_042020_0_0_6"/>
<dbReference type="Proteomes" id="UP000001006">
    <property type="component" value="Chromosome"/>
</dbReference>
<dbReference type="Proteomes" id="UP000002673">
    <property type="component" value="Chromosome"/>
</dbReference>
<dbReference type="GO" id="GO:0005886">
    <property type="term" value="C:plasma membrane"/>
    <property type="evidence" value="ECO:0007669"/>
    <property type="project" value="UniProtKB-SubCell"/>
</dbReference>
<dbReference type="GO" id="GO:0022900">
    <property type="term" value="P:electron transport chain"/>
    <property type="evidence" value="ECO:0007669"/>
    <property type="project" value="UniProtKB-UniRule"/>
</dbReference>
<dbReference type="GO" id="GO:0055085">
    <property type="term" value="P:transmembrane transport"/>
    <property type="evidence" value="ECO:0007669"/>
    <property type="project" value="InterPro"/>
</dbReference>
<dbReference type="HAMAP" id="MF_00462">
    <property type="entry name" value="RsxD_RnfD"/>
    <property type="match status" value="1"/>
</dbReference>
<dbReference type="InterPro" id="IPR004338">
    <property type="entry name" value="NqrB/RnfD"/>
</dbReference>
<dbReference type="InterPro" id="IPR011303">
    <property type="entry name" value="RnfD_bac"/>
</dbReference>
<dbReference type="NCBIfam" id="NF002011">
    <property type="entry name" value="PRK00816.1"/>
    <property type="match status" value="1"/>
</dbReference>
<dbReference type="NCBIfam" id="TIGR01946">
    <property type="entry name" value="rnfD"/>
    <property type="match status" value="1"/>
</dbReference>
<dbReference type="PANTHER" id="PTHR30578">
    <property type="entry name" value="ELECTRON TRANSPORT COMPLEX PROTEIN RNFD"/>
    <property type="match status" value="1"/>
</dbReference>
<dbReference type="PANTHER" id="PTHR30578:SF0">
    <property type="entry name" value="ION-TRANSLOCATING OXIDOREDUCTASE COMPLEX SUBUNIT D"/>
    <property type="match status" value="1"/>
</dbReference>
<dbReference type="Pfam" id="PF03116">
    <property type="entry name" value="NQR2_RnfD_RnfE"/>
    <property type="match status" value="1"/>
</dbReference>
<sequence>MVFRIASSPYTHNQRQTSRIMLLVLLAAVPGIAAQLRFFGWGTLVQILLASVSALLAEALVLKLRKQSVAATLKDNSALLTGLLLAVSIPPLAPWWMVVLGTVFAVIIAKQLYGGLGQNPFNPAMIGYVVLLISFPVQMTSWLPPHEIAVNIPGFIDAIQVIFSGHTASGGDMNTLRLGIDGISQATPLDTFKTSVRAGHSVEQIMQYPIYSGILAGAGWQWVNLAWLAGGVWLLWQKAIRWHIPLSFLVTLALCATLGWLFSPETLAAPQIHLLSGATMLGAFFILTDPVTASTTNRGRLMFGALAGLLVWLIRSFGGYPDGVAFAVLLANITVPLIDYYTRPRVYGHRKG</sequence>
<gene>
    <name evidence="1" type="primary">rsxD</name>
    <name type="ordered locus">SF1655</name>
    <name type="ordered locus">S1787</name>
</gene>
<feature type="chain" id="PRO_0000298240" description="Ion-translocating oxidoreductase complex subunit D">
    <location>
        <begin position="1"/>
        <end position="352"/>
    </location>
</feature>
<feature type="transmembrane region" description="Helical" evidence="1">
    <location>
        <begin position="20"/>
        <end position="40"/>
    </location>
</feature>
<feature type="transmembrane region" description="Helical" evidence="1">
    <location>
        <begin position="42"/>
        <end position="62"/>
    </location>
</feature>
<feature type="transmembrane region" description="Helical" evidence="1">
    <location>
        <begin position="78"/>
        <end position="109"/>
    </location>
</feature>
<feature type="transmembrane region" description="Helical" evidence="1">
    <location>
        <begin position="123"/>
        <end position="143"/>
    </location>
</feature>
<feature type="transmembrane region" description="Helical" evidence="1">
    <location>
        <begin position="148"/>
        <end position="168"/>
    </location>
</feature>
<feature type="transmembrane region" description="Helical" evidence="1">
    <location>
        <begin position="214"/>
        <end position="234"/>
    </location>
</feature>
<feature type="transmembrane region" description="Helical" evidence="1">
    <location>
        <begin position="242"/>
        <end position="262"/>
    </location>
</feature>
<feature type="transmembrane region" description="Helical" evidence="1">
    <location>
        <begin position="267"/>
        <end position="287"/>
    </location>
</feature>
<feature type="transmembrane region" description="Helical" evidence="1">
    <location>
        <begin position="301"/>
        <end position="318"/>
    </location>
</feature>
<feature type="modified residue" description="FMN phosphoryl threonine" evidence="1">
    <location>
        <position position="187"/>
    </location>
</feature>
<organism>
    <name type="scientific">Shigella flexneri</name>
    <dbReference type="NCBI Taxonomy" id="623"/>
    <lineage>
        <taxon>Bacteria</taxon>
        <taxon>Pseudomonadati</taxon>
        <taxon>Pseudomonadota</taxon>
        <taxon>Gammaproteobacteria</taxon>
        <taxon>Enterobacterales</taxon>
        <taxon>Enterobacteriaceae</taxon>
        <taxon>Shigella</taxon>
    </lineage>
</organism>
<comment type="function">
    <text evidence="1">Part of a membrane-bound complex that couples electron transfer with translocation of ions across the membrane. Required to maintain the reduced state of SoxR.</text>
</comment>
<comment type="cofactor">
    <cofactor evidence="1">
        <name>FMN</name>
        <dbReference type="ChEBI" id="CHEBI:58210"/>
    </cofactor>
</comment>
<comment type="subunit">
    <text evidence="1">The complex is composed of six subunits: RsxA, RsxB, RsxC, RsxD, RsxE and RsxG.</text>
</comment>
<comment type="subcellular location">
    <subcellularLocation>
        <location evidence="1">Cell inner membrane</location>
        <topology evidence="1">Multi-pass membrane protein</topology>
    </subcellularLocation>
</comment>
<comment type="similarity">
    <text evidence="1">Belongs to the NqrB/RnfD family.</text>
</comment>
<proteinExistence type="inferred from homology"/>
<reference key="1">
    <citation type="journal article" date="2002" name="Nucleic Acids Res.">
        <title>Genome sequence of Shigella flexneri 2a: insights into pathogenicity through comparison with genomes of Escherichia coli K12 and O157.</title>
        <authorList>
            <person name="Jin Q."/>
            <person name="Yuan Z."/>
            <person name="Xu J."/>
            <person name="Wang Y."/>
            <person name="Shen Y."/>
            <person name="Lu W."/>
            <person name="Wang J."/>
            <person name="Liu H."/>
            <person name="Yang J."/>
            <person name="Yang F."/>
            <person name="Zhang X."/>
            <person name="Zhang J."/>
            <person name="Yang G."/>
            <person name="Wu H."/>
            <person name="Qu D."/>
            <person name="Dong J."/>
            <person name="Sun L."/>
            <person name="Xue Y."/>
            <person name="Zhao A."/>
            <person name="Gao Y."/>
            <person name="Zhu J."/>
            <person name="Kan B."/>
            <person name="Ding K."/>
            <person name="Chen S."/>
            <person name="Cheng H."/>
            <person name="Yao Z."/>
            <person name="He B."/>
            <person name="Chen R."/>
            <person name="Ma D."/>
            <person name="Qiang B."/>
            <person name="Wen Y."/>
            <person name="Hou Y."/>
            <person name="Yu J."/>
        </authorList>
    </citation>
    <scope>NUCLEOTIDE SEQUENCE [LARGE SCALE GENOMIC DNA]</scope>
    <source>
        <strain>301 / Serotype 2a</strain>
    </source>
</reference>
<reference key="2">
    <citation type="journal article" date="2003" name="Infect. Immun.">
        <title>Complete genome sequence and comparative genomics of Shigella flexneri serotype 2a strain 2457T.</title>
        <authorList>
            <person name="Wei J."/>
            <person name="Goldberg M.B."/>
            <person name="Burland V."/>
            <person name="Venkatesan M.M."/>
            <person name="Deng W."/>
            <person name="Fournier G."/>
            <person name="Mayhew G.F."/>
            <person name="Plunkett G. III"/>
            <person name="Rose D.J."/>
            <person name="Darling A."/>
            <person name="Mau B."/>
            <person name="Perna N.T."/>
            <person name="Payne S.M."/>
            <person name="Runyen-Janecky L.J."/>
            <person name="Zhou S."/>
            <person name="Schwartz D.C."/>
            <person name="Blattner F.R."/>
        </authorList>
    </citation>
    <scope>NUCLEOTIDE SEQUENCE [LARGE SCALE GENOMIC DNA]</scope>
    <source>
        <strain>ATCC 700930 / 2457T / Serotype 2a</strain>
    </source>
</reference>
<name>RSXD_SHIFL</name>
<accession>Q83KY5</accession>
<accession>Q7C1G6</accession>
<protein>
    <recommendedName>
        <fullName evidence="1">Ion-translocating oxidoreductase complex subunit D</fullName>
        <ecNumber evidence="1">7.-.-.-</ecNumber>
    </recommendedName>
    <alternativeName>
        <fullName evidence="1">Rsx electron transport complex subunit D</fullName>
    </alternativeName>
</protein>
<evidence type="ECO:0000255" key="1">
    <source>
        <dbReference type="HAMAP-Rule" id="MF_00462"/>
    </source>
</evidence>
<keyword id="KW-0997">Cell inner membrane</keyword>
<keyword id="KW-1003">Cell membrane</keyword>
<keyword id="KW-0249">Electron transport</keyword>
<keyword id="KW-0285">Flavoprotein</keyword>
<keyword id="KW-0288">FMN</keyword>
<keyword id="KW-0472">Membrane</keyword>
<keyword id="KW-0597">Phosphoprotein</keyword>
<keyword id="KW-1185">Reference proteome</keyword>
<keyword id="KW-1278">Translocase</keyword>
<keyword id="KW-0812">Transmembrane</keyword>
<keyword id="KW-1133">Transmembrane helix</keyword>
<keyword id="KW-0813">Transport</keyword>